<sequence length="186" mass="21740">MNVSKYVAIFSFVFIQLISVGKVFANADEWMTTFRENIAQTRQQPEHYDLYIPAITWHARFAYDKEKTDRYNERPWGGGFGLSRWDEKGNWHGLYAMAFKDSWNKWEPIAGYGWESTWRPLADENFHLGLGFTAGVTARDNWNYIPLPVLLPLASVGYGPVTFQMTYIPGTYNNGNVYFAWMRFQF</sequence>
<feature type="signal peptide" evidence="1">
    <location>
        <begin position="1"/>
        <end position="25"/>
    </location>
</feature>
<feature type="chain" id="PRO_0000414449" description="Lipid A palmitoyltransferase PagP">
    <location>
        <begin position="26"/>
        <end position="186"/>
    </location>
</feature>
<feature type="active site" evidence="1">
    <location>
        <position position="58"/>
    </location>
</feature>
<feature type="active site" evidence="1">
    <location>
        <position position="101"/>
    </location>
</feature>
<feature type="active site" evidence="1">
    <location>
        <position position="102"/>
    </location>
</feature>
<feature type="site" description="Role in lipopolysaccharide recognition" evidence="1">
    <location>
        <position position="67"/>
    </location>
</feature>
<feature type="site" description="Role in the phospholipid gating" evidence="1">
    <location>
        <position position="172"/>
    </location>
</feature>
<organism>
    <name type="scientific">Escherichia coli (strain ATCC 55124 / KO11FL)</name>
    <dbReference type="NCBI Taxonomy" id="595495"/>
    <lineage>
        <taxon>Bacteria</taxon>
        <taxon>Pseudomonadati</taxon>
        <taxon>Pseudomonadota</taxon>
        <taxon>Gammaproteobacteria</taxon>
        <taxon>Enterobacterales</taxon>
        <taxon>Enterobacteriaceae</taxon>
        <taxon>Escherichia</taxon>
    </lineage>
</organism>
<dbReference type="EC" id="2.3.1.251" evidence="1"/>
<dbReference type="EMBL" id="CP002516">
    <property type="protein sequence ID" value="ADX51826.1"/>
    <property type="molecule type" value="Genomic_DNA"/>
</dbReference>
<dbReference type="RefSeq" id="WP_001349980.1">
    <property type="nucleotide sequence ID" value="NC_017660.1"/>
</dbReference>
<dbReference type="BMRB" id="E8Y6Y6"/>
<dbReference type="SMR" id="E8Y6Y6"/>
<dbReference type="KEGG" id="ekf:KO11_20555"/>
<dbReference type="KEGG" id="eko:EKO11_3243"/>
<dbReference type="PATRIC" id="fig|595495.17.peg.4267"/>
<dbReference type="GO" id="GO:0009279">
    <property type="term" value="C:cell outer membrane"/>
    <property type="evidence" value="ECO:0007669"/>
    <property type="project" value="UniProtKB-SubCell"/>
</dbReference>
<dbReference type="GO" id="GO:0016416">
    <property type="term" value="F:O-palmitoyltransferase activity"/>
    <property type="evidence" value="ECO:0007669"/>
    <property type="project" value="UniProtKB-UniRule"/>
</dbReference>
<dbReference type="GO" id="GO:0009245">
    <property type="term" value="P:lipid A biosynthetic process"/>
    <property type="evidence" value="ECO:0007669"/>
    <property type="project" value="UniProtKB-UniRule"/>
</dbReference>
<dbReference type="FunFam" id="2.40.160.20:FF:000002">
    <property type="entry name" value="Lipid A palmitoyltransferase PagP"/>
    <property type="match status" value="1"/>
</dbReference>
<dbReference type="Gene3D" id="2.40.160.20">
    <property type="match status" value="1"/>
</dbReference>
<dbReference type="HAMAP" id="MF_00837">
    <property type="entry name" value="PagP_transferase"/>
    <property type="match status" value="1"/>
</dbReference>
<dbReference type="InterPro" id="IPR009746">
    <property type="entry name" value="LipidA_acyl_PagP"/>
</dbReference>
<dbReference type="InterPro" id="IPR011250">
    <property type="entry name" value="OMP/PagP_b-brl"/>
</dbReference>
<dbReference type="NCBIfam" id="NF008271">
    <property type="entry name" value="PRK11045.1"/>
    <property type="match status" value="1"/>
</dbReference>
<dbReference type="Pfam" id="PF07017">
    <property type="entry name" value="PagP"/>
    <property type="match status" value="1"/>
</dbReference>
<dbReference type="SUPFAM" id="SSF56925">
    <property type="entry name" value="OMPA-like"/>
    <property type="match status" value="1"/>
</dbReference>
<protein>
    <recommendedName>
        <fullName evidence="1">Lipid A palmitoyltransferase PagP</fullName>
        <ecNumber evidence="1">2.3.1.251</ecNumber>
    </recommendedName>
    <alternativeName>
        <fullName evidence="1">Lipid A acylation protein</fullName>
    </alternativeName>
</protein>
<proteinExistence type="inferred from homology"/>
<evidence type="ECO:0000255" key="1">
    <source>
        <dbReference type="HAMAP-Rule" id="MF_00837"/>
    </source>
</evidence>
<accession>E8Y6Y6</accession>
<keyword id="KW-0012">Acyltransferase</keyword>
<keyword id="KW-0998">Cell outer membrane</keyword>
<keyword id="KW-0472">Membrane</keyword>
<keyword id="KW-0732">Signal</keyword>
<keyword id="KW-0808">Transferase</keyword>
<name>PAGP_ECOKO</name>
<gene>
    <name evidence="1" type="primary">pagP</name>
    <name type="ordered locus">EKO11_3243</name>
</gene>
<comment type="function">
    <text evidence="1">Transfers a palmitate residue from the sn-1 position of a phospholipid to the N-linked hydroxymyristate on the proximal unit of lipid A or its precursors.</text>
</comment>
<comment type="catalytic activity">
    <reaction evidence="1">
        <text>lipid A (E. coli) + a 1-hexadecanoyl-2-acyl-sn-glycero-3-phosphocholine = hepta-acyl lipid A (E. coli) + a 2-acyl-sn-glycero-3-phosphocholine</text>
        <dbReference type="Rhea" id="RHEA:46864"/>
        <dbReference type="ChEBI" id="CHEBI:57875"/>
        <dbReference type="ChEBI" id="CHEBI:77369"/>
        <dbReference type="ChEBI" id="CHEBI:87048"/>
        <dbReference type="ChEBI" id="CHEBI:134257"/>
        <dbReference type="EC" id="2.3.1.251"/>
    </reaction>
</comment>
<comment type="catalytic activity">
    <reaction evidence="1">
        <text>lipid IIA + a 1-hexadecanoyl-2-acyl-sn-glycero-3-phosphocholine = lipid IIB + a 2-acyl-sn-glycero-3-phosphocholine</text>
        <dbReference type="Rhea" id="RHEA:46872"/>
        <dbReference type="ChEBI" id="CHEBI:57875"/>
        <dbReference type="ChEBI" id="CHEBI:77369"/>
        <dbReference type="ChEBI" id="CHEBI:86226"/>
        <dbReference type="ChEBI" id="CHEBI:87058"/>
        <dbReference type="EC" id="2.3.1.251"/>
    </reaction>
</comment>
<comment type="catalytic activity">
    <reaction evidence="1">
        <text>lipid IVA (E. coli) + a 1-hexadecanoyl-2-acyl-sn-glycero-3-phosphocholine = lipid IVB (E. coli) + a 2-acyl-sn-glycero-3-phosphocholine</text>
        <dbReference type="Rhea" id="RHEA:46868"/>
        <dbReference type="ChEBI" id="CHEBI:57875"/>
        <dbReference type="ChEBI" id="CHEBI:58603"/>
        <dbReference type="ChEBI" id="CHEBI:77369"/>
        <dbReference type="ChEBI" id="CHEBI:87049"/>
        <dbReference type="EC" id="2.3.1.251"/>
    </reaction>
</comment>
<comment type="subunit">
    <text evidence="1">Homodimer.</text>
</comment>
<comment type="subcellular location">
    <subcellularLocation>
        <location evidence="1">Cell outer membrane</location>
    </subcellularLocation>
</comment>
<comment type="similarity">
    <text evidence="1">Belongs to the lipid A palmitoyltransferase family.</text>
</comment>
<reference key="1">
    <citation type="submission" date="2011-02" db="EMBL/GenBank/DDBJ databases">
        <title>Complete sequence of chromosome of Escherichia coli KO11.</title>
        <authorList>
            <consortium name="US DOE Joint Genome Institute"/>
            <person name="Lucas S."/>
            <person name="Copeland A."/>
            <person name="Lapidus A."/>
            <person name="Cheng J.-F."/>
            <person name="Goodwin L."/>
            <person name="Pitluck S."/>
            <person name="Munk A.C."/>
            <person name="Detter J.C."/>
            <person name="Han C."/>
            <person name="Tapia R."/>
            <person name="Land M."/>
            <person name="Hauser L."/>
            <person name="Kyrpides N."/>
            <person name="Ivanova N."/>
            <person name="Ovchinnikova G."/>
            <person name="Pagani I."/>
            <person name="Keating D."/>
            <person name="Landick R."/>
            <person name="Woyke T."/>
        </authorList>
    </citation>
    <scope>NUCLEOTIDE SEQUENCE [LARGE SCALE GENOMIC DNA]</scope>
    <source>
        <strain>ATCC 55124 / KO11FL</strain>
    </source>
</reference>